<accession>O53281</accession>
<accession>L0TEA3</accession>
<sequence>MNVLSLGSSSGVVWGRVPITAPAGAATGVTSRADAHSQMRRYAQTGPTAKLSSAPMTTMWGAPLHRRWRGSRLRDPRQAKFLTLASLKWVLANRAYTPWYLVRYWRLLRFKLANPHIITRGMVFLGKGVEIHATPELAQLEIGRWVHIGDKNTIRAHEGSLRFGDKVVLGRDNVINTYLDIEIGDSVLMADWCYICDFDHRMDDITLPIKDQGIIKSPVRIGPDTWIGVKVSVLRGTTIGRGCVLGSHAVVRGAIPDYSIAVGAPAKVVKNRQLSWEASAAQRAELAAALADIERKKAAR</sequence>
<dbReference type="EC" id="2.3.1.-" evidence="3"/>
<dbReference type="EMBL" id="AL123456">
    <property type="protein sequence ID" value="CCP45843.1"/>
    <property type="molecule type" value="Genomic_DNA"/>
</dbReference>
<dbReference type="PIR" id="E70859">
    <property type="entry name" value="E70859"/>
</dbReference>
<dbReference type="RefSeq" id="NP_217550.1">
    <property type="nucleotide sequence ID" value="NC_000962.3"/>
</dbReference>
<dbReference type="RefSeq" id="WP_003902399.1">
    <property type="nucleotide sequence ID" value="NC_000962.3"/>
</dbReference>
<dbReference type="SMR" id="O53281"/>
<dbReference type="STRING" id="83332.Rv3034c"/>
<dbReference type="PaxDb" id="83332-Rv3034c"/>
<dbReference type="DNASU" id="887470"/>
<dbReference type="GeneID" id="887470"/>
<dbReference type="KEGG" id="mtu:Rv3034c"/>
<dbReference type="KEGG" id="mtv:RVBD_3034c"/>
<dbReference type="PATRIC" id="fig|83332.111.peg.3381"/>
<dbReference type="TubercuList" id="Rv3034c"/>
<dbReference type="eggNOG" id="COG0110">
    <property type="taxonomic scope" value="Bacteria"/>
</dbReference>
<dbReference type="InParanoid" id="O53281"/>
<dbReference type="OrthoDB" id="2643438at2"/>
<dbReference type="PhylomeDB" id="O53281"/>
<dbReference type="Proteomes" id="UP000001584">
    <property type="component" value="Chromosome"/>
</dbReference>
<dbReference type="GO" id="GO:0009274">
    <property type="term" value="C:peptidoglycan-based cell wall"/>
    <property type="evidence" value="ECO:0007005"/>
    <property type="project" value="MTBBASE"/>
</dbReference>
<dbReference type="GO" id="GO:0005886">
    <property type="term" value="C:plasma membrane"/>
    <property type="evidence" value="ECO:0007005"/>
    <property type="project" value="MTBBASE"/>
</dbReference>
<dbReference type="GO" id="GO:0016746">
    <property type="term" value="F:acyltransferase activity"/>
    <property type="evidence" value="ECO:0007669"/>
    <property type="project" value="UniProtKB-KW"/>
</dbReference>
<dbReference type="CDD" id="cd04647">
    <property type="entry name" value="LbH_MAT_like"/>
    <property type="match status" value="1"/>
</dbReference>
<dbReference type="FunFam" id="2.160.10.10:FF:000041">
    <property type="entry name" value="POSSIBLE TRANSFERASE"/>
    <property type="match status" value="1"/>
</dbReference>
<dbReference type="Gene3D" id="2.160.10.10">
    <property type="entry name" value="Hexapeptide repeat proteins"/>
    <property type="match status" value="1"/>
</dbReference>
<dbReference type="InterPro" id="IPR001451">
    <property type="entry name" value="Hexapep"/>
</dbReference>
<dbReference type="InterPro" id="IPR051159">
    <property type="entry name" value="Hexapeptide_acetyltransf"/>
</dbReference>
<dbReference type="InterPro" id="IPR011004">
    <property type="entry name" value="Trimer_LpxA-like_sf"/>
</dbReference>
<dbReference type="PANTHER" id="PTHR23416:SF78">
    <property type="entry name" value="LIPOPOLYSACCHARIDE BIOSYNTHESIS O-ACETYL TRANSFERASE WBBJ-RELATED"/>
    <property type="match status" value="1"/>
</dbReference>
<dbReference type="PANTHER" id="PTHR23416">
    <property type="entry name" value="SIALIC ACID SYNTHASE-RELATED"/>
    <property type="match status" value="1"/>
</dbReference>
<dbReference type="Pfam" id="PF00132">
    <property type="entry name" value="Hexapep"/>
    <property type="match status" value="1"/>
</dbReference>
<dbReference type="SUPFAM" id="SSF51161">
    <property type="entry name" value="Trimeric LpxA-like enzymes"/>
    <property type="match status" value="1"/>
</dbReference>
<protein>
    <recommendedName>
        <fullName evidence="3">Probable acetyltransferase Rv3034c</fullName>
        <ecNumber evidence="3">2.3.1.-</ecNumber>
    </recommendedName>
    <alternativeName>
        <fullName evidence="3">Peroxisome homeostasis protein Rv3034c</fullName>
    </alternativeName>
</protein>
<keyword id="KW-0012">Acyltransferase</keyword>
<keyword id="KW-1185">Reference proteome</keyword>
<keyword id="KW-0677">Repeat</keyword>
<keyword id="KW-0732">Signal</keyword>
<keyword id="KW-0808">Transferase</keyword>
<keyword id="KW-0843">Virulence</keyword>
<feature type="signal peptide" evidence="1">
    <location>
        <begin position="1"/>
        <end position="25"/>
    </location>
</feature>
<feature type="chain" id="PRO_0000413012" description="Probable acetyltransferase Rv3034c">
    <location>
        <begin position="26"/>
        <end position="300"/>
    </location>
</feature>
<gene>
    <name type="ordered locus">Rv3034c</name>
</gene>
<comment type="function">
    <text evidence="4">May be involved in the biosynthesis of 6-O-methylglucosyl-containing lipopolysaccharides (MGLP).</text>
</comment>
<comment type="function">
    <text evidence="2">Regulates host peroxisome homeostasis in response to intracellular redox levels to favor mycobacterial infection in macrophage (PubMed:32388919). Induces the expression of host peroxisome biogenesis and proliferation factors as well as peroxisome associated enzymes. Inhibits the induction of host pexophagy mechanism by down-regulating the expression of pexophagy associated proteins and adapter molecules in infected macrophages. However, during increased oxidative stress conditions, it induces degradation of dysfunctional and damaged peroxisomes. Regulation of peroxisome biogenesis and degradation is dependent upon host p-mTORC1 mediated signaling pathway (PubMed:32388919).</text>
</comment>
<comment type="similarity">
    <text evidence="3">Belongs to the transferase hexapeptide repeat family.</text>
</comment>
<organism>
    <name type="scientific">Mycobacterium tuberculosis (strain ATCC 25618 / H37Rv)</name>
    <dbReference type="NCBI Taxonomy" id="83332"/>
    <lineage>
        <taxon>Bacteria</taxon>
        <taxon>Bacillati</taxon>
        <taxon>Actinomycetota</taxon>
        <taxon>Actinomycetes</taxon>
        <taxon>Mycobacteriales</taxon>
        <taxon>Mycobacteriaceae</taxon>
        <taxon>Mycobacterium</taxon>
        <taxon>Mycobacterium tuberculosis complex</taxon>
    </lineage>
</organism>
<proteinExistence type="evidence at protein level"/>
<reference key="1">
    <citation type="journal article" date="1998" name="Nature">
        <title>Deciphering the biology of Mycobacterium tuberculosis from the complete genome sequence.</title>
        <authorList>
            <person name="Cole S.T."/>
            <person name="Brosch R."/>
            <person name="Parkhill J."/>
            <person name="Garnier T."/>
            <person name="Churcher C.M."/>
            <person name="Harris D.E."/>
            <person name="Gordon S.V."/>
            <person name="Eiglmeier K."/>
            <person name="Gas S."/>
            <person name="Barry C.E. III"/>
            <person name="Tekaia F."/>
            <person name="Badcock K."/>
            <person name="Basham D."/>
            <person name="Brown D."/>
            <person name="Chillingworth T."/>
            <person name="Connor R."/>
            <person name="Davies R.M."/>
            <person name="Devlin K."/>
            <person name="Feltwell T."/>
            <person name="Gentles S."/>
            <person name="Hamlin N."/>
            <person name="Holroyd S."/>
            <person name="Hornsby T."/>
            <person name="Jagels K."/>
            <person name="Krogh A."/>
            <person name="McLean J."/>
            <person name="Moule S."/>
            <person name="Murphy L.D."/>
            <person name="Oliver S."/>
            <person name="Osborne J."/>
            <person name="Quail M.A."/>
            <person name="Rajandream M.A."/>
            <person name="Rogers J."/>
            <person name="Rutter S."/>
            <person name="Seeger K."/>
            <person name="Skelton S."/>
            <person name="Squares S."/>
            <person name="Squares R."/>
            <person name="Sulston J.E."/>
            <person name="Taylor K."/>
            <person name="Whitehead S."/>
            <person name="Barrell B.G."/>
        </authorList>
    </citation>
    <scope>NUCLEOTIDE SEQUENCE [LARGE SCALE GENOMIC DNA]</scope>
    <source>
        <strain>ATCC 25618 / H37Rv</strain>
    </source>
</reference>
<reference key="2">
    <citation type="journal article" date="2007" name="J. Biol. Chem.">
        <title>Genetic basis for the biosynthesis of methylglucose lipopolysaccharides in Mycobacterium tuberculosis.</title>
        <authorList>
            <person name="Stadthagen G."/>
            <person name="Sambou T."/>
            <person name="Guerin M."/>
            <person name="Barilone N."/>
            <person name="Boudou F."/>
            <person name="Kordulakova J."/>
            <person name="Charles P."/>
            <person name="Alzari P.M."/>
            <person name="Lemassu A."/>
            <person name="Daffe M."/>
            <person name="Puzo G."/>
            <person name="Gicquel B."/>
            <person name="Riviere M."/>
            <person name="Jackson M."/>
        </authorList>
    </citation>
    <scope>PUTATIVE FUNCTION</scope>
    <source>
        <strain>ATCC 25618 / H37Rv</strain>
    </source>
</reference>
<reference key="3">
    <citation type="journal article" date="2011" name="Mol. Cell. Proteomics">
        <title>Proteogenomic analysis of Mycobacterium tuberculosis by high resolution mass spectrometry.</title>
        <authorList>
            <person name="Kelkar D.S."/>
            <person name="Kumar D."/>
            <person name="Kumar P."/>
            <person name="Balakrishnan L."/>
            <person name="Muthusamy B."/>
            <person name="Yadav A.K."/>
            <person name="Shrivastava P."/>
            <person name="Marimuthu A."/>
            <person name="Anand S."/>
            <person name="Sundaram H."/>
            <person name="Kingsbury R."/>
            <person name="Harsha H.C."/>
            <person name="Nair B."/>
            <person name="Prasad T.S."/>
            <person name="Chauhan D.S."/>
            <person name="Katoch K."/>
            <person name="Katoch V.M."/>
            <person name="Kumar P."/>
            <person name="Chaerkady R."/>
            <person name="Ramachandran S."/>
            <person name="Dash D."/>
            <person name="Pandey A."/>
        </authorList>
    </citation>
    <scope>IDENTIFICATION BY MASS SPECTROMETRY [LARGE SCALE ANALYSIS]</scope>
    <source>
        <strain>ATCC 25618 / H37Rv</strain>
    </source>
</reference>
<reference key="4">
    <citation type="journal article" date="2020" name="Cell. Microbiol.">
        <title>Mycobacterium tuberculosis Rv3034c regulates mTORC1 and PPAR-gamma dependant pexophagy mechanism to control redox levels in macrophages.</title>
        <authorList>
            <person name="Ganguli G."/>
            <person name="Pattanaik K.P."/>
            <person name="Jagadeb M."/>
            <person name="Sonawane A."/>
        </authorList>
    </citation>
    <scope>FUNCTION IN VIRULENCE</scope>
    <source>
        <strain>H37Rv</strain>
    </source>
</reference>
<evidence type="ECO:0000255" key="1"/>
<evidence type="ECO:0000269" key="2">
    <source>
    </source>
</evidence>
<evidence type="ECO:0000305" key="3"/>
<evidence type="ECO:0000305" key="4">
    <source>
    </source>
</evidence>
<name>Y3034_MYCTU</name>